<name>GK_HHV1M</name>
<accession>P68332</accession>
<accession>P10237</accession>
<reference key="1">
    <citation type="journal article" date="1987" name="Virology">
        <title>The single base pair substitution responsible for the Syn phenotype of herpes simplex virus type 1, strain MP.</title>
        <authorList>
            <person name="Pogue-Geile K.L."/>
            <person name="Spear P.G."/>
        </authorList>
    </citation>
    <scope>NUCLEOTIDE SEQUENCE [GENOMIC DNA]</scope>
</reference>
<comment type="function">
    <text evidence="1">Glycoprotein that probably modulates membrane fusion events during secondary envelopment of cytoplasmic capsids that bud into specific trans-Golgi network (TGN)-derived membranes. Also plays a role, together with gB, in virus-induced cell-to-cell fusion (syncytia formation). Seems to block fusion of virions with infected-cell membranes (By similarity).</text>
</comment>
<comment type="subunit">
    <text evidence="1">Interacts (via UL20 interaction region) with protein UL20 (via N-terminus); this interaction probably plays a role in the coordinate transport of protein UL20 and gK to the trans-Golgi network (TGN), and is required for the cell surface expression of gK.</text>
</comment>
<comment type="subcellular location">
    <subcellularLocation>
        <location evidence="1">Host cell membrane</location>
        <topology evidence="1">Multi-pass membrane protein</topology>
    </subcellularLocation>
    <subcellularLocation>
        <location evidence="1">Host endosome membrane</location>
        <topology evidence="1">Multi-pass membrane protein</topology>
    </subcellularLocation>
    <subcellularLocation>
        <location evidence="1">Host Golgi apparatus membrane</location>
        <topology evidence="1">Multi-pass membrane protein</topology>
    </subcellularLocation>
    <text evidence="1">During virion morphogenesis, this protein probably accumulates in the endosomes and trans-Golgi where secondary envelopment occurs. It is probably transported with UL20 to the cell surface from where it is endocytosed and directed to the trans-Golgi network (TGN). Cell surface expression of gK is required for virus-induced cell-to-cell fusion. Probably not present in extracellular virions (By similarity).</text>
</comment>
<comment type="PTM">
    <text evidence="1">N-glycosylated.</text>
</comment>
<comment type="similarity">
    <text evidence="3">Belongs to the alphaherpesvirinae glycoprotein K family.</text>
</comment>
<dbReference type="EMBL" id="M16610">
    <property type="protein sequence ID" value="AAA45810.1"/>
    <property type="molecule type" value="Genomic_DNA"/>
</dbReference>
<dbReference type="PIR" id="A94358">
    <property type="entry name" value="MMBEK2"/>
</dbReference>
<dbReference type="RefSeq" id="YP_009137129.1">
    <property type="nucleotide sequence ID" value="NC_001806.2"/>
</dbReference>
<dbReference type="SMR" id="P68332"/>
<dbReference type="GlyCosmos" id="P68332">
    <property type="glycosylation" value="2 sites, No reported glycans"/>
</dbReference>
<dbReference type="DNASU" id="2703425"/>
<dbReference type="GeneID" id="2703425"/>
<dbReference type="KEGG" id="vg:2703425"/>
<dbReference type="GO" id="GO:0044175">
    <property type="term" value="C:host cell endosome membrane"/>
    <property type="evidence" value="ECO:0007669"/>
    <property type="project" value="UniProtKB-SubCell"/>
</dbReference>
<dbReference type="GO" id="GO:0044178">
    <property type="term" value="C:host cell Golgi membrane"/>
    <property type="evidence" value="ECO:0007669"/>
    <property type="project" value="UniProtKB-SubCell"/>
</dbReference>
<dbReference type="GO" id="GO:0020002">
    <property type="term" value="C:host cell plasma membrane"/>
    <property type="evidence" value="ECO:0007669"/>
    <property type="project" value="UniProtKB-SubCell"/>
</dbReference>
<dbReference type="GO" id="GO:0016020">
    <property type="term" value="C:membrane"/>
    <property type="evidence" value="ECO:0007669"/>
    <property type="project" value="UniProtKB-KW"/>
</dbReference>
<dbReference type="GO" id="GO:0039700">
    <property type="term" value="P:fusion of viral membrane with host outer nuclear membrane"/>
    <property type="evidence" value="ECO:0007669"/>
    <property type="project" value="UniProtKB-KW"/>
</dbReference>
<dbReference type="GO" id="GO:0060141">
    <property type="term" value="P:symbiont-mediated induction of syncytium formation"/>
    <property type="evidence" value="ECO:0007669"/>
    <property type="project" value="UniProtKB-KW"/>
</dbReference>
<dbReference type="InterPro" id="IPR002567">
    <property type="entry name" value="GK"/>
</dbReference>
<dbReference type="Pfam" id="PF01621">
    <property type="entry name" value="Fusion_gly_K"/>
    <property type="match status" value="1"/>
</dbReference>
<organismHost>
    <name type="scientific">Homo sapiens</name>
    <name type="common">Human</name>
    <dbReference type="NCBI Taxonomy" id="9606"/>
</organismHost>
<proteinExistence type="inferred from homology"/>
<protein>
    <recommendedName>
        <fullName>Envelope glycoprotein K</fullName>
    </recommendedName>
    <alternativeName>
        <fullName>Syncytial protein</fullName>
    </alternativeName>
</protein>
<sequence length="338" mass="37573">MLAVRSLQHLSTVVLITAYGLVLVWYTVFGASPLHRCIYAVRPTGTNNDTALVWMKMNQTLLFLGAPTHPPNGGWRNHAHICYANLIAGRVVPFQVPPDAMNRRIMNVHEAVNCLETLWYTRVRLVVVGWFLYLAFVALHQRRCMFGVVSPAHKMVAPATYLLNYAGRIVSSVFLQYPYTKITRLLCELSVQRQNLVQLFETDPVTFLYHRPAIGVIVGCELMLRFVAVGLIVGTAFISRGACAITYPLFLTITTWCFVSTIGLTELYCILRRGPAPKNADKAAAPGRSKGLSGVCGRCCSIILSGIAVRLCYIAVVAGVVLVALHYEQEIQRRLFDV</sequence>
<evidence type="ECO:0000250" key="1"/>
<evidence type="ECO:0000255" key="2"/>
<evidence type="ECO:0000305" key="3"/>
<keyword id="KW-0325">Glycoprotein</keyword>
<keyword id="KW-1032">Host cell membrane</keyword>
<keyword id="KW-1039">Host endosome</keyword>
<keyword id="KW-1040">Host Golgi apparatus</keyword>
<keyword id="KW-1043">Host membrane</keyword>
<keyword id="KW-0472">Membrane</keyword>
<keyword id="KW-0732">Signal</keyword>
<keyword id="KW-1180">Syncytium formation induced by viral infection</keyword>
<keyword id="KW-0812">Transmembrane</keyword>
<keyword id="KW-1133">Transmembrane helix</keyword>
<keyword id="KW-1181">Viral primary envelope fusion with host outer nuclear membrane</keyword>
<keyword id="KW-1188">Viral release from host cell</keyword>
<feature type="signal peptide">
    <location>
        <begin position="1"/>
        <end position="30"/>
    </location>
</feature>
<feature type="chain" id="PRO_0000038301" description="Envelope glycoprotein K">
    <location>
        <begin position="31"/>
        <end position="338"/>
    </location>
</feature>
<feature type="topological domain" description="Extracellular" evidence="2">
    <location>
        <begin position="31"/>
        <end position="121"/>
    </location>
</feature>
<feature type="transmembrane region" description="Helical" evidence="2">
    <location>
        <begin position="122"/>
        <end position="140"/>
    </location>
</feature>
<feature type="topological domain" description="Cytoplasmic" evidence="2">
    <location>
        <begin position="141"/>
        <end position="212"/>
    </location>
</feature>
<feature type="transmembrane region" description="Helical" evidence="2">
    <location>
        <begin position="213"/>
        <end position="233"/>
    </location>
</feature>
<feature type="topological domain" description="Extracellular" evidence="2">
    <location>
        <begin position="234"/>
        <end position="243"/>
    </location>
</feature>
<feature type="transmembrane region" description="Helical" evidence="2">
    <location>
        <begin position="244"/>
        <end position="264"/>
    </location>
</feature>
<feature type="topological domain" description="Cytoplasmic" evidence="2">
    <location>
        <begin position="265"/>
        <end position="301"/>
    </location>
</feature>
<feature type="transmembrane region" description="Helical" evidence="2">
    <location>
        <begin position="302"/>
        <end position="322"/>
    </location>
</feature>
<feature type="topological domain" description="Extracellular" evidence="2">
    <location>
        <begin position="323"/>
        <end position="338"/>
    </location>
</feature>
<feature type="region of interest" description="Involved in fusion" evidence="2">
    <location>
        <begin position="31"/>
        <end position="121"/>
    </location>
</feature>
<feature type="region of interest" description="Interaction with UL20" evidence="2">
    <location>
        <begin position="265"/>
        <end position="301"/>
    </location>
</feature>
<feature type="glycosylation site" description="N-linked (GlcNAc...) asparagine; by host" evidence="2">
    <location>
        <position position="48"/>
    </location>
</feature>
<feature type="glycosylation site" description="N-linked (GlcNAc...) asparagine; by host" evidence="2">
    <location>
        <position position="58"/>
    </location>
</feature>
<feature type="sequence variant" description="In mutant strain; syn phenotype.">
    <original>A</original>
    <variation>G</variation>
    <location>
        <position position="40"/>
    </location>
</feature>
<organism>
    <name type="scientific">Human herpesvirus 1 (strain MP)</name>
    <name type="common">HHV-1</name>
    <name type="synonym">Human herpes simplex virus 1</name>
    <dbReference type="NCBI Taxonomy" id="10307"/>
    <lineage>
        <taxon>Viruses</taxon>
        <taxon>Duplodnaviria</taxon>
        <taxon>Heunggongvirae</taxon>
        <taxon>Peploviricota</taxon>
        <taxon>Herviviricetes</taxon>
        <taxon>Herpesvirales</taxon>
        <taxon>Orthoherpesviridae</taxon>
        <taxon>Alphaherpesvirinae</taxon>
        <taxon>Simplexvirus</taxon>
        <taxon>Simplexvirus humanalpha1</taxon>
        <taxon>Human herpesvirus 1</taxon>
    </lineage>
</organism>
<gene>
    <name type="primary">gK</name>
    <name type="ORF">UL53</name>
</gene>